<comment type="function">
    <text evidence="1">Exhibits S-adenosyl-L-methionine-dependent methyltransferase activity.</text>
</comment>
<comment type="similarity">
    <text evidence="2">Belongs to the UPF0677 family.</text>
</comment>
<organism>
    <name type="scientific">Mycobacterium sp. (strain JLS)</name>
    <dbReference type="NCBI Taxonomy" id="164757"/>
    <lineage>
        <taxon>Bacteria</taxon>
        <taxon>Bacillati</taxon>
        <taxon>Actinomycetota</taxon>
        <taxon>Actinomycetes</taxon>
        <taxon>Mycobacteriales</taxon>
        <taxon>Mycobacteriaceae</taxon>
        <taxon>Mycobacterium</taxon>
    </lineage>
</organism>
<keyword id="KW-0489">Methyltransferase</keyword>
<keyword id="KW-0949">S-adenosyl-L-methionine</keyword>
<keyword id="KW-0808">Transferase</keyword>
<dbReference type="EC" id="2.1.1.-"/>
<dbReference type="EMBL" id="CP000580">
    <property type="protein sequence ID" value="ABN96879.1"/>
    <property type="molecule type" value="Genomic_DNA"/>
</dbReference>
<dbReference type="SMR" id="A3PVF2"/>
<dbReference type="KEGG" id="mjl:Mjls_1072"/>
<dbReference type="HOGENOM" id="CLU_056160_2_1_11"/>
<dbReference type="BioCyc" id="MSP164757:G1G8C-1085-MONOMER"/>
<dbReference type="GO" id="GO:0008168">
    <property type="term" value="F:methyltransferase activity"/>
    <property type="evidence" value="ECO:0007669"/>
    <property type="project" value="UniProtKB-KW"/>
</dbReference>
<dbReference type="GO" id="GO:0032259">
    <property type="term" value="P:methylation"/>
    <property type="evidence" value="ECO:0007669"/>
    <property type="project" value="UniProtKB-KW"/>
</dbReference>
<dbReference type="FunFam" id="3.40.50.150:FF:000152">
    <property type="entry name" value="S-adenosyl-L-methionine-dependent methyltransferase"/>
    <property type="match status" value="1"/>
</dbReference>
<dbReference type="Gene3D" id="3.40.50.150">
    <property type="entry name" value="Vaccinia Virus protein VP39"/>
    <property type="match status" value="1"/>
</dbReference>
<dbReference type="InterPro" id="IPR007213">
    <property type="entry name" value="Ppm1/Ppm2/Tcmp"/>
</dbReference>
<dbReference type="InterPro" id="IPR029063">
    <property type="entry name" value="SAM-dependent_MTases_sf"/>
</dbReference>
<dbReference type="InterPro" id="IPR011610">
    <property type="entry name" value="SAM_mthyl_Trfase_ML2640-like"/>
</dbReference>
<dbReference type="NCBIfam" id="TIGR00027">
    <property type="entry name" value="mthyl_TIGR00027"/>
    <property type="match status" value="1"/>
</dbReference>
<dbReference type="PANTHER" id="PTHR43619">
    <property type="entry name" value="S-ADENOSYL-L-METHIONINE-DEPENDENT METHYLTRANSFERASE YKTD-RELATED"/>
    <property type="match status" value="1"/>
</dbReference>
<dbReference type="PANTHER" id="PTHR43619:SF2">
    <property type="entry name" value="S-ADENOSYL-L-METHIONINE-DEPENDENT METHYLTRANSFERASES SUPERFAMILY PROTEIN"/>
    <property type="match status" value="1"/>
</dbReference>
<dbReference type="Pfam" id="PF04072">
    <property type="entry name" value="LCM"/>
    <property type="match status" value="1"/>
</dbReference>
<dbReference type="SUPFAM" id="SSF53335">
    <property type="entry name" value="S-adenosyl-L-methionine-dependent methyltransferases"/>
    <property type="match status" value="1"/>
</dbReference>
<protein>
    <recommendedName>
        <fullName>Putative S-adenosyl-L-methionine-dependent methyltransferase Mjls_1072</fullName>
        <ecNumber>2.1.1.-</ecNumber>
    </recommendedName>
</protein>
<name>Y1072_MYCSJ</name>
<proteinExistence type="inferred from homology"/>
<sequence length="297" mass="32665">MARSDEDSWDLASSVGATATMVAAARAVASRGPEALIDDPYADALVRAVGVEYFVKLLDGEITLEADNAAMLAVMTDVMAVRTRFFDDFFLSSGLPQAVILASGLDARAYRLPWPSGSVVYEIDQPEVIEFKTRTLADLGASPAAELRTVAIDLRDDWPRALRDRGFDPTAPTAWIAEGLLIYLPPDAQDRLFDNITALSAPGSRLATEFHPDAGARIGASSQRMAEEWRRHGLDLDMADLFYDGERNPVVDYLRERGWEVEARSRPDMFAHYGRPFPTGEAVEALRQSLAVTATRR</sequence>
<feature type="chain" id="PRO_0000361204" description="Putative S-adenosyl-L-methionine-dependent methyltransferase Mjls_1072">
    <location>
        <begin position="1"/>
        <end position="297"/>
    </location>
</feature>
<feature type="binding site" evidence="1">
    <location>
        <position position="124"/>
    </location>
    <ligand>
        <name>S-adenosyl-L-methionine</name>
        <dbReference type="ChEBI" id="CHEBI:59789"/>
    </ligand>
</feature>
<feature type="binding site" evidence="1">
    <location>
        <begin position="153"/>
        <end position="154"/>
    </location>
    <ligand>
        <name>S-adenosyl-L-methionine</name>
        <dbReference type="ChEBI" id="CHEBI:59789"/>
    </ligand>
</feature>
<gene>
    <name type="ordered locus">Mjls_1072</name>
</gene>
<reference key="1">
    <citation type="submission" date="2007-02" db="EMBL/GenBank/DDBJ databases">
        <title>Complete sequence of Mycobacterium sp. JLS.</title>
        <authorList>
            <consortium name="US DOE Joint Genome Institute"/>
            <person name="Copeland A."/>
            <person name="Lucas S."/>
            <person name="Lapidus A."/>
            <person name="Barry K."/>
            <person name="Detter J.C."/>
            <person name="Glavina del Rio T."/>
            <person name="Hammon N."/>
            <person name="Israni S."/>
            <person name="Dalin E."/>
            <person name="Tice H."/>
            <person name="Pitluck S."/>
            <person name="Chain P."/>
            <person name="Malfatti S."/>
            <person name="Shin M."/>
            <person name="Vergez L."/>
            <person name="Schmutz J."/>
            <person name="Larimer F."/>
            <person name="Land M."/>
            <person name="Hauser L."/>
            <person name="Kyrpides N."/>
            <person name="Mikhailova N."/>
            <person name="Miller C.D."/>
            <person name="Anderson A.J."/>
            <person name="Sims R.C."/>
            <person name="Richardson P."/>
        </authorList>
    </citation>
    <scope>NUCLEOTIDE SEQUENCE [LARGE SCALE GENOMIC DNA]</scope>
    <source>
        <strain>JLS</strain>
    </source>
</reference>
<accession>A3PVF2</accession>
<evidence type="ECO:0000250" key="1"/>
<evidence type="ECO:0000305" key="2"/>